<evidence type="ECO:0000255" key="1">
    <source>
        <dbReference type="HAMAP-Rule" id="MF_03157"/>
    </source>
</evidence>
<evidence type="ECO:0000269" key="2">
    <source>
    </source>
</evidence>
<reference key="1">
    <citation type="journal article" date="2002" name="Nature">
        <title>The genome sequence of Schizosaccharomyces pombe.</title>
        <authorList>
            <person name="Wood V."/>
            <person name="Gwilliam R."/>
            <person name="Rajandream M.A."/>
            <person name="Lyne M.H."/>
            <person name="Lyne R."/>
            <person name="Stewart A."/>
            <person name="Sgouros J.G."/>
            <person name="Peat N."/>
            <person name="Hayles J."/>
            <person name="Baker S.G."/>
            <person name="Basham D."/>
            <person name="Bowman S."/>
            <person name="Brooks K."/>
            <person name="Brown D."/>
            <person name="Brown S."/>
            <person name="Chillingworth T."/>
            <person name="Churcher C.M."/>
            <person name="Collins M."/>
            <person name="Connor R."/>
            <person name="Cronin A."/>
            <person name="Davis P."/>
            <person name="Feltwell T."/>
            <person name="Fraser A."/>
            <person name="Gentles S."/>
            <person name="Goble A."/>
            <person name="Hamlin N."/>
            <person name="Harris D.E."/>
            <person name="Hidalgo J."/>
            <person name="Hodgson G."/>
            <person name="Holroyd S."/>
            <person name="Hornsby T."/>
            <person name="Howarth S."/>
            <person name="Huckle E.J."/>
            <person name="Hunt S."/>
            <person name="Jagels K."/>
            <person name="James K.D."/>
            <person name="Jones L."/>
            <person name="Jones M."/>
            <person name="Leather S."/>
            <person name="McDonald S."/>
            <person name="McLean J."/>
            <person name="Mooney P."/>
            <person name="Moule S."/>
            <person name="Mungall K.L."/>
            <person name="Murphy L.D."/>
            <person name="Niblett D."/>
            <person name="Odell C."/>
            <person name="Oliver K."/>
            <person name="O'Neil S."/>
            <person name="Pearson D."/>
            <person name="Quail M.A."/>
            <person name="Rabbinowitsch E."/>
            <person name="Rutherford K.M."/>
            <person name="Rutter S."/>
            <person name="Saunders D."/>
            <person name="Seeger K."/>
            <person name="Sharp S."/>
            <person name="Skelton J."/>
            <person name="Simmonds M.N."/>
            <person name="Squares R."/>
            <person name="Squares S."/>
            <person name="Stevens K."/>
            <person name="Taylor K."/>
            <person name="Taylor R.G."/>
            <person name="Tivey A."/>
            <person name="Walsh S.V."/>
            <person name="Warren T."/>
            <person name="Whitehead S."/>
            <person name="Woodward J.R."/>
            <person name="Volckaert G."/>
            <person name="Aert R."/>
            <person name="Robben J."/>
            <person name="Grymonprez B."/>
            <person name="Weltjens I."/>
            <person name="Vanstreels E."/>
            <person name="Rieger M."/>
            <person name="Schaefer M."/>
            <person name="Mueller-Auer S."/>
            <person name="Gabel C."/>
            <person name="Fuchs M."/>
            <person name="Duesterhoeft A."/>
            <person name="Fritzc C."/>
            <person name="Holzer E."/>
            <person name="Moestl D."/>
            <person name="Hilbert H."/>
            <person name="Borzym K."/>
            <person name="Langer I."/>
            <person name="Beck A."/>
            <person name="Lehrach H."/>
            <person name="Reinhardt R."/>
            <person name="Pohl T.M."/>
            <person name="Eger P."/>
            <person name="Zimmermann W."/>
            <person name="Wedler H."/>
            <person name="Wambutt R."/>
            <person name="Purnelle B."/>
            <person name="Goffeau A."/>
            <person name="Cadieu E."/>
            <person name="Dreano S."/>
            <person name="Gloux S."/>
            <person name="Lelaure V."/>
            <person name="Mottier S."/>
            <person name="Galibert F."/>
            <person name="Aves S.J."/>
            <person name="Xiang Z."/>
            <person name="Hunt C."/>
            <person name="Moore K."/>
            <person name="Hurst S.M."/>
            <person name="Lucas M."/>
            <person name="Rochet M."/>
            <person name="Gaillardin C."/>
            <person name="Tallada V.A."/>
            <person name="Garzon A."/>
            <person name="Thode G."/>
            <person name="Daga R.R."/>
            <person name="Cruzado L."/>
            <person name="Jimenez J."/>
            <person name="Sanchez M."/>
            <person name="del Rey F."/>
            <person name="Benito J."/>
            <person name="Dominguez A."/>
            <person name="Revuelta J.L."/>
            <person name="Moreno S."/>
            <person name="Armstrong J."/>
            <person name="Forsburg S.L."/>
            <person name="Cerutti L."/>
            <person name="Lowe T."/>
            <person name="McCombie W.R."/>
            <person name="Paulsen I."/>
            <person name="Potashkin J."/>
            <person name="Shpakovski G.V."/>
            <person name="Ussery D."/>
            <person name="Barrell B.G."/>
            <person name="Nurse P."/>
        </authorList>
    </citation>
    <scope>NUCLEOTIDE SEQUENCE [LARGE SCALE GENOMIC DNA]</scope>
    <source>
        <strain>972 / ATCC 24843</strain>
    </source>
</reference>
<reference key="2">
    <citation type="journal article" date="2006" name="Nat. Biotechnol.">
        <title>ORFeome cloning and global analysis of protein localization in the fission yeast Schizosaccharomyces pombe.</title>
        <authorList>
            <person name="Matsuyama A."/>
            <person name="Arai R."/>
            <person name="Yashiroda Y."/>
            <person name="Shirai A."/>
            <person name="Kamata A."/>
            <person name="Sekido S."/>
            <person name="Kobayashi Y."/>
            <person name="Hashimoto A."/>
            <person name="Hamamoto M."/>
            <person name="Hiraoka Y."/>
            <person name="Horinouchi S."/>
            <person name="Yoshida M."/>
        </authorList>
    </citation>
    <scope>SUBCELLULAR LOCATION [LARGE SCALE ANALYSIS]</scope>
</reference>
<organism>
    <name type="scientific">Schizosaccharomyces pombe (strain 972 / ATCC 24843)</name>
    <name type="common">Fission yeast</name>
    <dbReference type="NCBI Taxonomy" id="284812"/>
    <lineage>
        <taxon>Eukaryota</taxon>
        <taxon>Fungi</taxon>
        <taxon>Dikarya</taxon>
        <taxon>Ascomycota</taxon>
        <taxon>Taphrinomycotina</taxon>
        <taxon>Schizosaccharomycetes</taxon>
        <taxon>Schizosaccharomycetales</taxon>
        <taxon>Schizosaccharomycetaceae</taxon>
        <taxon>Schizosaccharomyces</taxon>
    </lineage>
</organism>
<proteinExistence type="inferred from homology"/>
<gene>
    <name type="ORF">SPCC61.03</name>
</gene>
<comment type="function">
    <text evidence="1">Catalyzes the dehydration of the S-form of NAD(P)HX at the expense of ATP, which is converted to ADP. Together with NAD(P)HX epimerase, which catalyzes the epimerization of the S- and R-forms, the enzyme allows the repair of both epimers of NAD(P)HX, a damaged form of NAD(P)H that is a result of enzymatic or heat-dependent hydration.</text>
</comment>
<comment type="catalytic activity">
    <reaction evidence="1">
        <text>(6S)-NADHX + ATP = ADP + phosphate + NADH + H(+)</text>
        <dbReference type="Rhea" id="RHEA:19017"/>
        <dbReference type="ChEBI" id="CHEBI:15378"/>
        <dbReference type="ChEBI" id="CHEBI:30616"/>
        <dbReference type="ChEBI" id="CHEBI:43474"/>
        <dbReference type="ChEBI" id="CHEBI:57945"/>
        <dbReference type="ChEBI" id="CHEBI:64074"/>
        <dbReference type="ChEBI" id="CHEBI:456216"/>
        <dbReference type="EC" id="4.2.1.93"/>
    </reaction>
</comment>
<comment type="catalytic activity">
    <reaction>
        <text>(6S)-NADPHX + ATP = ADP + phosphate + NADPH + H(+)</text>
        <dbReference type="Rhea" id="RHEA:32231"/>
        <dbReference type="ChEBI" id="CHEBI:15378"/>
        <dbReference type="ChEBI" id="CHEBI:30616"/>
        <dbReference type="ChEBI" id="CHEBI:43474"/>
        <dbReference type="ChEBI" id="CHEBI:57783"/>
        <dbReference type="ChEBI" id="CHEBI:64076"/>
        <dbReference type="ChEBI" id="CHEBI:456216"/>
        <dbReference type="EC" id="4.2.1.93"/>
    </reaction>
</comment>
<comment type="cofactor">
    <cofactor evidence="1">
        <name>Mg(2+)</name>
        <dbReference type="ChEBI" id="CHEBI:18420"/>
    </cofactor>
</comment>
<comment type="subcellular location">
    <subcellularLocation>
        <location evidence="1 2">Cytoplasm</location>
    </subcellularLocation>
</comment>
<comment type="similarity">
    <text evidence="1">Belongs to the NnrD/CARKD family.</text>
</comment>
<accession>O94347</accession>
<dbReference type="EC" id="4.2.1.93" evidence="1"/>
<dbReference type="EMBL" id="CU329672">
    <property type="protein sequence ID" value="CAA22272.1"/>
    <property type="molecule type" value="Genomic_DNA"/>
</dbReference>
<dbReference type="PIR" id="T41463">
    <property type="entry name" value="T41463"/>
</dbReference>
<dbReference type="SMR" id="O94347"/>
<dbReference type="BioGRID" id="276063">
    <property type="interactions" value="15"/>
</dbReference>
<dbReference type="FunCoup" id="O94347">
    <property type="interactions" value="22"/>
</dbReference>
<dbReference type="STRING" id="284812.O94347"/>
<dbReference type="PaxDb" id="4896-SPCC61.03.1"/>
<dbReference type="EnsemblFungi" id="SPCC61.03.1">
    <property type="protein sequence ID" value="SPCC61.03.1:pep"/>
    <property type="gene ID" value="SPCC61.03"/>
</dbReference>
<dbReference type="KEGG" id="spo:2539500"/>
<dbReference type="PomBase" id="SPCC61.03"/>
<dbReference type="VEuPathDB" id="FungiDB:SPCC61.03"/>
<dbReference type="eggNOG" id="KOG3974">
    <property type="taxonomic scope" value="Eukaryota"/>
</dbReference>
<dbReference type="HOGENOM" id="CLU_030651_3_0_1"/>
<dbReference type="InParanoid" id="O94347"/>
<dbReference type="OMA" id="WRAAYHN"/>
<dbReference type="PhylomeDB" id="O94347"/>
<dbReference type="Reactome" id="R-SPO-197264">
    <property type="pathway name" value="Nicotinamide salvaging"/>
</dbReference>
<dbReference type="PRO" id="PR:O94347"/>
<dbReference type="Proteomes" id="UP000002485">
    <property type="component" value="Chromosome III"/>
</dbReference>
<dbReference type="GO" id="GO:0005829">
    <property type="term" value="C:cytosol"/>
    <property type="evidence" value="ECO:0007005"/>
    <property type="project" value="PomBase"/>
</dbReference>
<dbReference type="GO" id="GO:0005524">
    <property type="term" value="F:ATP binding"/>
    <property type="evidence" value="ECO:0007669"/>
    <property type="project" value="UniProtKB-KW"/>
</dbReference>
<dbReference type="GO" id="GO:0047453">
    <property type="term" value="F:ATP-dependent NAD(P)H-hydrate dehydratase activity"/>
    <property type="evidence" value="ECO:0000318"/>
    <property type="project" value="GO_Central"/>
</dbReference>
<dbReference type="GO" id="GO:0110051">
    <property type="term" value="P:metabolite repair"/>
    <property type="evidence" value="ECO:0000318"/>
    <property type="project" value="GO_Central"/>
</dbReference>
<dbReference type="GO" id="GO:0046496">
    <property type="term" value="P:nicotinamide nucleotide metabolic process"/>
    <property type="evidence" value="ECO:0000266"/>
    <property type="project" value="PomBase"/>
</dbReference>
<dbReference type="CDD" id="cd01171">
    <property type="entry name" value="YXKO-related"/>
    <property type="match status" value="1"/>
</dbReference>
<dbReference type="FunFam" id="3.40.1190.20:FF:000043">
    <property type="entry name" value="ATP-dependent (S)-NAD(P)H-hydrate dehydratase"/>
    <property type="match status" value="1"/>
</dbReference>
<dbReference type="Gene3D" id="3.40.1190.20">
    <property type="match status" value="1"/>
</dbReference>
<dbReference type="HAMAP" id="MF_01965">
    <property type="entry name" value="NADHX_dehydratase"/>
    <property type="match status" value="1"/>
</dbReference>
<dbReference type="InterPro" id="IPR017953">
    <property type="entry name" value="Carbohydrate_kinase_pred_CS"/>
</dbReference>
<dbReference type="InterPro" id="IPR000631">
    <property type="entry name" value="CARKD"/>
</dbReference>
<dbReference type="InterPro" id="IPR029056">
    <property type="entry name" value="Ribokinase-like"/>
</dbReference>
<dbReference type="NCBIfam" id="TIGR00196">
    <property type="entry name" value="yjeF_cterm"/>
    <property type="match status" value="1"/>
</dbReference>
<dbReference type="PANTHER" id="PTHR12592:SF0">
    <property type="entry name" value="ATP-DEPENDENT (S)-NAD(P)H-HYDRATE DEHYDRATASE"/>
    <property type="match status" value="1"/>
</dbReference>
<dbReference type="PANTHER" id="PTHR12592">
    <property type="entry name" value="ATP-DEPENDENT (S)-NAD(P)H-HYDRATE DEHYDRATASE FAMILY MEMBER"/>
    <property type="match status" value="1"/>
</dbReference>
<dbReference type="Pfam" id="PF01256">
    <property type="entry name" value="Carb_kinase"/>
    <property type="match status" value="1"/>
</dbReference>
<dbReference type="SUPFAM" id="SSF53613">
    <property type="entry name" value="Ribokinase-like"/>
    <property type="match status" value="1"/>
</dbReference>
<dbReference type="PROSITE" id="PS01049">
    <property type="entry name" value="YJEF_C_1"/>
    <property type="match status" value="1"/>
</dbReference>
<dbReference type="PROSITE" id="PS51383">
    <property type="entry name" value="YJEF_C_3"/>
    <property type="match status" value="1"/>
</dbReference>
<keyword id="KW-0067">ATP-binding</keyword>
<keyword id="KW-0963">Cytoplasm</keyword>
<keyword id="KW-0456">Lyase</keyword>
<keyword id="KW-0520">NAD</keyword>
<keyword id="KW-0521">NADP</keyword>
<keyword id="KW-0547">Nucleotide-binding</keyword>
<keyword id="KW-0597">Phosphoprotein</keyword>
<keyword id="KW-1185">Reference proteome</keyword>
<protein>
    <recommendedName>
        <fullName evidence="1">ATP-dependent (S)-NAD(P)H-hydrate dehydratase</fullName>
        <ecNumber evidence="1">4.2.1.93</ecNumber>
    </recommendedName>
    <alternativeName>
        <fullName evidence="1">ATP-dependent NAD(P)HX dehydratase</fullName>
    </alternativeName>
</protein>
<name>NNRD_SCHPO</name>
<feature type="chain" id="PRO_0000315959" description="ATP-dependent (S)-NAD(P)H-hydrate dehydratase">
    <location>
        <begin position="1"/>
        <end position="327"/>
    </location>
</feature>
<feature type="domain" description="YjeF C-terminal" evidence="1">
    <location>
        <begin position="11"/>
        <end position="313"/>
    </location>
</feature>
<feature type="binding site" evidence="1">
    <location>
        <position position="121"/>
    </location>
    <ligand>
        <name>(6S)-NADPHX</name>
        <dbReference type="ChEBI" id="CHEBI:64076"/>
    </ligand>
</feature>
<feature type="binding site" evidence="1">
    <location>
        <begin position="174"/>
        <end position="180"/>
    </location>
    <ligand>
        <name>(6S)-NADPHX</name>
        <dbReference type="ChEBI" id="CHEBI:64076"/>
    </ligand>
</feature>
<feature type="binding site" evidence="1">
    <location>
        <begin position="209"/>
        <end position="213"/>
    </location>
    <ligand>
        <name>ATP</name>
        <dbReference type="ChEBI" id="CHEBI:30616"/>
    </ligand>
</feature>
<feature type="binding site" evidence="1">
    <location>
        <begin position="228"/>
        <end position="237"/>
    </location>
    <ligand>
        <name>ATP</name>
        <dbReference type="ChEBI" id="CHEBI:30616"/>
    </ligand>
</feature>
<feature type="binding site" evidence="1">
    <location>
        <position position="238"/>
    </location>
    <ligand>
        <name>(6S)-NADPHX</name>
        <dbReference type="ChEBI" id="CHEBI:64076"/>
    </ligand>
</feature>
<sequence>MTSGSPKITNLLTRVKRIIPPLLDTFHKGQAGRVGVFGGCQHYTGAPYYSSMSSMLFGSDQSHIFCEKEAANVIKSYSPDLIVHPFLREKDKAGPEDSVDKCFELIKPMMGRLHAIVIGPGLGRDEWMQEIMAKVIEYARKNDMPMVIDADGLWLIQQRPELVSGYHNVILTPNVIEFKRLCDKLDIKSDGPDACNQLAGKLNLLIIQKGQSDIISDGATAYACSVPGGLKRCGGQGDILTGILATFLAWRHAYLSKEWDTEGNMDAKECLFLAAFGASACTRWCSRLAFKECGRATQSTDLVRHVGKAYNALMEDEIPSVEEKIKD</sequence>